<feature type="chain" id="PRO_1000139460" description="CTP synthase">
    <location>
        <begin position="1"/>
        <end position="546"/>
    </location>
</feature>
<feature type="domain" description="Glutamine amidotransferase type-1" evidence="1">
    <location>
        <begin position="294"/>
        <end position="546"/>
    </location>
</feature>
<feature type="region of interest" description="Amidoligase domain" evidence="1">
    <location>
        <begin position="1"/>
        <end position="269"/>
    </location>
</feature>
<feature type="active site" description="Nucleophile; for glutamine hydrolysis" evidence="1">
    <location>
        <position position="383"/>
    </location>
</feature>
<feature type="active site" evidence="1">
    <location>
        <position position="519"/>
    </location>
</feature>
<feature type="active site" evidence="1">
    <location>
        <position position="521"/>
    </location>
</feature>
<feature type="binding site" evidence="1">
    <location>
        <position position="16"/>
    </location>
    <ligand>
        <name>CTP</name>
        <dbReference type="ChEBI" id="CHEBI:37563"/>
        <note>allosteric inhibitor</note>
    </ligand>
</feature>
<feature type="binding site" evidence="1">
    <location>
        <position position="16"/>
    </location>
    <ligand>
        <name>UTP</name>
        <dbReference type="ChEBI" id="CHEBI:46398"/>
    </ligand>
</feature>
<feature type="binding site" evidence="1">
    <location>
        <begin position="17"/>
        <end position="22"/>
    </location>
    <ligand>
        <name>ATP</name>
        <dbReference type="ChEBI" id="CHEBI:30616"/>
    </ligand>
</feature>
<feature type="binding site" evidence="1">
    <location>
        <position position="74"/>
    </location>
    <ligand>
        <name>ATP</name>
        <dbReference type="ChEBI" id="CHEBI:30616"/>
    </ligand>
</feature>
<feature type="binding site" evidence="1">
    <location>
        <position position="74"/>
    </location>
    <ligand>
        <name>Mg(2+)</name>
        <dbReference type="ChEBI" id="CHEBI:18420"/>
    </ligand>
</feature>
<feature type="binding site" evidence="1">
    <location>
        <position position="143"/>
    </location>
    <ligand>
        <name>Mg(2+)</name>
        <dbReference type="ChEBI" id="CHEBI:18420"/>
    </ligand>
</feature>
<feature type="binding site" evidence="1">
    <location>
        <begin position="150"/>
        <end position="152"/>
    </location>
    <ligand>
        <name>CTP</name>
        <dbReference type="ChEBI" id="CHEBI:37563"/>
        <note>allosteric inhibitor</note>
    </ligand>
</feature>
<feature type="binding site" evidence="1">
    <location>
        <begin position="190"/>
        <end position="195"/>
    </location>
    <ligand>
        <name>CTP</name>
        <dbReference type="ChEBI" id="CHEBI:37563"/>
        <note>allosteric inhibitor</note>
    </ligand>
</feature>
<feature type="binding site" evidence="1">
    <location>
        <begin position="190"/>
        <end position="195"/>
    </location>
    <ligand>
        <name>UTP</name>
        <dbReference type="ChEBI" id="CHEBI:46398"/>
    </ligand>
</feature>
<feature type="binding site" evidence="1">
    <location>
        <position position="226"/>
    </location>
    <ligand>
        <name>CTP</name>
        <dbReference type="ChEBI" id="CHEBI:37563"/>
        <note>allosteric inhibitor</note>
    </ligand>
</feature>
<feature type="binding site" evidence="1">
    <location>
        <position position="226"/>
    </location>
    <ligand>
        <name>UTP</name>
        <dbReference type="ChEBI" id="CHEBI:46398"/>
    </ligand>
</feature>
<feature type="binding site" evidence="1">
    <location>
        <position position="356"/>
    </location>
    <ligand>
        <name>L-glutamine</name>
        <dbReference type="ChEBI" id="CHEBI:58359"/>
    </ligand>
</feature>
<feature type="binding site" evidence="1">
    <location>
        <begin position="384"/>
        <end position="387"/>
    </location>
    <ligand>
        <name>L-glutamine</name>
        <dbReference type="ChEBI" id="CHEBI:58359"/>
    </ligand>
</feature>
<feature type="binding site" evidence="1">
    <location>
        <position position="407"/>
    </location>
    <ligand>
        <name>L-glutamine</name>
        <dbReference type="ChEBI" id="CHEBI:58359"/>
    </ligand>
</feature>
<feature type="binding site" evidence="1">
    <location>
        <position position="474"/>
    </location>
    <ligand>
        <name>L-glutamine</name>
        <dbReference type="ChEBI" id="CHEBI:58359"/>
    </ligand>
</feature>
<name>PYRG_FRATM</name>
<comment type="function">
    <text evidence="1">Catalyzes the ATP-dependent amination of UTP to CTP with either L-glutamine or ammonia as the source of nitrogen. Regulates intracellular CTP levels through interactions with the four ribonucleotide triphosphates.</text>
</comment>
<comment type="catalytic activity">
    <reaction evidence="1">
        <text>UTP + L-glutamine + ATP + H2O = CTP + L-glutamate + ADP + phosphate + 2 H(+)</text>
        <dbReference type="Rhea" id="RHEA:26426"/>
        <dbReference type="ChEBI" id="CHEBI:15377"/>
        <dbReference type="ChEBI" id="CHEBI:15378"/>
        <dbReference type="ChEBI" id="CHEBI:29985"/>
        <dbReference type="ChEBI" id="CHEBI:30616"/>
        <dbReference type="ChEBI" id="CHEBI:37563"/>
        <dbReference type="ChEBI" id="CHEBI:43474"/>
        <dbReference type="ChEBI" id="CHEBI:46398"/>
        <dbReference type="ChEBI" id="CHEBI:58359"/>
        <dbReference type="ChEBI" id="CHEBI:456216"/>
        <dbReference type="EC" id="6.3.4.2"/>
    </reaction>
</comment>
<comment type="catalytic activity">
    <reaction evidence="1">
        <text>L-glutamine + H2O = L-glutamate + NH4(+)</text>
        <dbReference type="Rhea" id="RHEA:15889"/>
        <dbReference type="ChEBI" id="CHEBI:15377"/>
        <dbReference type="ChEBI" id="CHEBI:28938"/>
        <dbReference type="ChEBI" id="CHEBI:29985"/>
        <dbReference type="ChEBI" id="CHEBI:58359"/>
    </reaction>
</comment>
<comment type="catalytic activity">
    <reaction evidence="1">
        <text>UTP + NH4(+) + ATP = CTP + ADP + phosphate + 2 H(+)</text>
        <dbReference type="Rhea" id="RHEA:16597"/>
        <dbReference type="ChEBI" id="CHEBI:15378"/>
        <dbReference type="ChEBI" id="CHEBI:28938"/>
        <dbReference type="ChEBI" id="CHEBI:30616"/>
        <dbReference type="ChEBI" id="CHEBI:37563"/>
        <dbReference type="ChEBI" id="CHEBI:43474"/>
        <dbReference type="ChEBI" id="CHEBI:46398"/>
        <dbReference type="ChEBI" id="CHEBI:456216"/>
    </reaction>
</comment>
<comment type="activity regulation">
    <text evidence="1">Allosterically activated by GTP, when glutamine is the substrate; GTP has no effect on the reaction when ammonia is the substrate. The allosteric effector GTP functions by stabilizing the protein conformation that binds the tetrahedral intermediate(s) formed during glutamine hydrolysis. Inhibited by the product CTP, via allosteric rather than competitive inhibition.</text>
</comment>
<comment type="pathway">
    <text evidence="1">Pyrimidine metabolism; CTP biosynthesis via de novo pathway; CTP from UDP: step 2/2.</text>
</comment>
<comment type="subunit">
    <text evidence="1">Homotetramer.</text>
</comment>
<comment type="miscellaneous">
    <text evidence="1">CTPSs have evolved a hybrid strategy for distinguishing between UTP and CTP. The overlapping regions of the product feedback inhibitory and substrate sites recognize a common feature in both compounds, the triphosphate moiety. To differentiate isosteric substrate and product pyrimidine rings, an additional pocket far from the expected kinase/ligase catalytic site, specifically recognizes the cytosine and ribose portions of the product inhibitor.</text>
</comment>
<comment type="similarity">
    <text evidence="1">Belongs to the CTP synthase family.</text>
</comment>
<organism>
    <name type="scientific">Francisella tularensis subsp. mediasiatica (strain FSC147)</name>
    <dbReference type="NCBI Taxonomy" id="441952"/>
    <lineage>
        <taxon>Bacteria</taxon>
        <taxon>Pseudomonadati</taxon>
        <taxon>Pseudomonadota</taxon>
        <taxon>Gammaproteobacteria</taxon>
        <taxon>Thiotrichales</taxon>
        <taxon>Francisellaceae</taxon>
        <taxon>Francisella</taxon>
    </lineage>
</organism>
<proteinExistence type="inferred from homology"/>
<reference key="1">
    <citation type="journal article" date="2009" name="PLoS Pathog.">
        <title>Molecular evolutionary consequences of niche restriction in Francisella tularensis, a facultative intracellular pathogen.</title>
        <authorList>
            <person name="Larsson P."/>
            <person name="Elfsmark D."/>
            <person name="Svensson K."/>
            <person name="Wikstroem P."/>
            <person name="Forsman M."/>
            <person name="Brettin T."/>
            <person name="Keim P."/>
            <person name="Johansson A."/>
        </authorList>
    </citation>
    <scope>NUCLEOTIDE SEQUENCE [LARGE SCALE GENOMIC DNA]</scope>
    <source>
        <strain>FSC147</strain>
    </source>
</reference>
<dbReference type="EC" id="6.3.4.2" evidence="1"/>
<dbReference type="EMBL" id="CP000915">
    <property type="protein sequence ID" value="ACD30354.1"/>
    <property type="molecule type" value="Genomic_DNA"/>
</dbReference>
<dbReference type="SMR" id="B2SFK1"/>
<dbReference type="MEROPS" id="C26.964"/>
<dbReference type="KEGG" id="ftm:FTM_0296"/>
<dbReference type="HOGENOM" id="CLU_011675_5_0_6"/>
<dbReference type="UniPathway" id="UPA00159">
    <property type="reaction ID" value="UER00277"/>
</dbReference>
<dbReference type="GO" id="GO:0005829">
    <property type="term" value="C:cytosol"/>
    <property type="evidence" value="ECO:0007669"/>
    <property type="project" value="TreeGrafter"/>
</dbReference>
<dbReference type="GO" id="GO:0005524">
    <property type="term" value="F:ATP binding"/>
    <property type="evidence" value="ECO:0007669"/>
    <property type="project" value="UniProtKB-KW"/>
</dbReference>
<dbReference type="GO" id="GO:0003883">
    <property type="term" value="F:CTP synthase activity"/>
    <property type="evidence" value="ECO:0007669"/>
    <property type="project" value="UniProtKB-UniRule"/>
</dbReference>
<dbReference type="GO" id="GO:0004359">
    <property type="term" value="F:glutaminase activity"/>
    <property type="evidence" value="ECO:0007669"/>
    <property type="project" value="RHEA"/>
</dbReference>
<dbReference type="GO" id="GO:0042802">
    <property type="term" value="F:identical protein binding"/>
    <property type="evidence" value="ECO:0007669"/>
    <property type="project" value="TreeGrafter"/>
</dbReference>
<dbReference type="GO" id="GO:0046872">
    <property type="term" value="F:metal ion binding"/>
    <property type="evidence" value="ECO:0007669"/>
    <property type="project" value="UniProtKB-KW"/>
</dbReference>
<dbReference type="GO" id="GO:0044210">
    <property type="term" value="P:'de novo' CTP biosynthetic process"/>
    <property type="evidence" value="ECO:0007669"/>
    <property type="project" value="UniProtKB-UniRule"/>
</dbReference>
<dbReference type="GO" id="GO:0019856">
    <property type="term" value="P:pyrimidine nucleobase biosynthetic process"/>
    <property type="evidence" value="ECO:0007669"/>
    <property type="project" value="TreeGrafter"/>
</dbReference>
<dbReference type="CDD" id="cd03113">
    <property type="entry name" value="CTPS_N"/>
    <property type="match status" value="1"/>
</dbReference>
<dbReference type="CDD" id="cd01746">
    <property type="entry name" value="GATase1_CTP_Synthase"/>
    <property type="match status" value="1"/>
</dbReference>
<dbReference type="FunFam" id="3.40.50.300:FF:000009">
    <property type="entry name" value="CTP synthase"/>
    <property type="match status" value="1"/>
</dbReference>
<dbReference type="FunFam" id="3.40.50.880:FF:000002">
    <property type="entry name" value="CTP synthase"/>
    <property type="match status" value="1"/>
</dbReference>
<dbReference type="Gene3D" id="3.40.50.880">
    <property type="match status" value="1"/>
</dbReference>
<dbReference type="Gene3D" id="3.40.50.300">
    <property type="entry name" value="P-loop containing nucleotide triphosphate hydrolases"/>
    <property type="match status" value="1"/>
</dbReference>
<dbReference type="HAMAP" id="MF_01227">
    <property type="entry name" value="PyrG"/>
    <property type="match status" value="1"/>
</dbReference>
<dbReference type="InterPro" id="IPR029062">
    <property type="entry name" value="Class_I_gatase-like"/>
</dbReference>
<dbReference type="InterPro" id="IPR004468">
    <property type="entry name" value="CTP_synthase"/>
</dbReference>
<dbReference type="InterPro" id="IPR017456">
    <property type="entry name" value="CTP_synthase_N"/>
</dbReference>
<dbReference type="InterPro" id="IPR017926">
    <property type="entry name" value="GATASE"/>
</dbReference>
<dbReference type="InterPro" id="IPR033828">
    <property type="entry name" value="GATase1_CTP_Synthase"/>
</dbReference>
<dbReference type="InterPro" id="IPR027417">
    <property type="entry name" value="P-loop_NTPase"/>
</dbReference>
<dbReference type="NCBIfam" id="NF003792">
    <property type="entry name" value="PRK05380.1"/>
    <property type="match status" value="1"/>
</dbReference>
<dbReference type="NCBIfam" id="TIGR00337">
    <property type="entry name" value="PyrG"/>
    <property type="match status" value="1"/>
</dbReference>
<dbReference type="PANTHER" id="PTHR11550">
    <property type="entry name" value="CTP SYNTHASE"/>
    <property type="match status" value="1"/>
</dbReference>
<dbReference type="PANTHER" id="PTHR11550:SF0">
    <property type="entry name" value="CTP SYNTHASE-RELATED"/>
    <property type="match status" value="1"/>
</dbReference>
<dbReference type="Pfam" id="PF06418">
    <property type="entry name" value="CTP_synth_N"/>
    <property type="match status" value="1"/>
</dbReference>
<dbReference type="Pfam" id="PF00117">
    <property type="entry name" value="GATase"/>
    <property type="match status" value="1"/>
</dbReference>
<dbReference type="SUPFAM" id="SSF52317">
    <property type="entry name" value="Class I glutamine amidotransferase-like"/>
    <property type="match status" value="1"/>
</dbReference>
<dbReference type="SUPFAM" id="SSF52540">
    <property type="entry name" value="P-loop containing nucleoside triphosphate hydrolases"/>
    <property type="match status" value="1"/>
</dbReference>
<dbReference type="PROSITE" id="PS51273">
    <property type="entry name" value="GATASE_TYPE_1"/>
    <property type="match status" value="1"/>
</dbReference>
<sequence length="546" mass="61029">MNSNTKIIFVTGGVVSSLGKGVTAASLATLLESRGLNVTMMKLDPYINVDPGTMSPLQHGEVFVTEDGAETDLDLGHYERFIRNKMTQANNFTTGKVYQSVLRRERKGDYLGATIQVIPHITDEIKRRICSGIADDVDVVIVEIGGTVGDIESQPFLEAIRQLRIELGRNRTLFVHLTLLPYIKVAGEIKTKPTQHSVKELRGIGIQADVLVCRCEKKFDDSEKRKIALFTNVDQDCIFTAEDVDTIYEVPLKYNQQGFDAKLVELLNLNAKEADLSEWQNVVNTIIDVKGEVTIAMVGKYVSLTEAYKSLNEALYNAGYKKGVKVKIKFVDSEDVNENNVESYFKDVAAILVPGGFGSRGIEGKIISIKYARENQIPFLGICLGMQLAVIEYARNILGIKDAHSSELEPTTANPVIGLITEWQAEDGTVHQRTHSSDLGGTMRLGGYKCVLKQGSRAREIYQADEVVERHRHRYEVNSNYVERLEEAGLIFSGRSEDNKLMELIEIPQHKWFIACQAHPEFTSTPRYGHKLFESYIQAAIENSNN</sequence>
<protein>
    <recommendedName>
        <fullName evidence="1">CTP synthase</fullName>
        <ecNumber evidence="1">6.3.4.2</ecNumber>
    </recommendedName>
    <alternativeName>
        <fullName evidence="1">Cytidine 5'-triphosphate synthase</fullName>
    </alternativeName>
    <alternativeName>
        <fullName evidence="1">Cytidine triphosphate synthetase</fullName>
        <shortName evidence="1">CTP synthetase</shortName>
        <shortName evidence="1">CTPS</shortName>
    </alternativeName>
    <alternativeName>
        <fullName evidence="1">UTP--ammonia ligase</fullName>
    </alternativeName>
</protein>
<gene>
    <name evidence="1" type="primary">pyrG</name>
    <name type="ordered locus">FTM_0296</name>
</gene>
<evidence type="ECO:0000255" key="1">
    <source>
        <dbReference type="HAMAP-Rule" id="MF_01227"/>
    </source>
</evidence>
<keyword id="KW-0067">ATP-binding</keyword>
<keyword id="KW-0315">Glutamine amidotransferase</keyword>
<keyword id="KW-0436">Ligase</keyword>
<keyword id="KW-0460">Magnesium</keyword>
<keyword id="KW-0479">Metal-binding</keyword>
<keyword id="KW-0547">Nucleotide-binding</keyword>
<keyword id="KW-0665">Pyrimidine biosynthesis</keyword>
<accession>B2SFK1</accession>